<evidence type="ECO:0000255" key="1">
    <source>
        <dbReference type="HAMAP-Rule" id="MF_01026"/>
    </source>
</evidence>
<protein>
    <recommendedName>
        <fullName evidence="1">3-isopropylmalate dehydratase large subunit</fullName>
        <ecNumber evidence="1">4.2.1.33</ecNumber>
    </recommendedName>
    <alternativeName>
        <fullName evidence="1">Alpha-IPM isomerase</fullName>
        <shortName evidence="1">IPMI</shortName>
    </alternativeName>
    <alternativeName>
        <fullName evidence="1">Isopropylmalate isomerase</fullName>
    </alternativeName>
</protein>
<accession>C0RFF1</accession>
<comment type="function">
    <text evidence="1">Catalyzes the isomerization between 2-isopropylmalate and 3-isopropylmalate, via the formation of 2-isopropylmaleate.</text>
</comment>
<comment type="catalytic activity">
    <reaction evidence="1">
        <text>(2R,3S)-3-isopropylmalate = (2S)-2-isopropylmalate</text>
        <dbReference type="Rhea" id="RHEA:32287"/>
        <dbReference type="ChEBI" id="CHEBI:1178"/>
        <dbReference type="ChEBI" id="CHEBI:35121"/>
        <dbReference type="EC" id="4.2.1.33"/>
    </reaction>
</comment>
<comment type="cofactor">
    <cofactor evidence="1">
        <name>[4Fe-4S] cluster</name>
        <dbReference type="ChEBI" id="CHEBI:49883"/>
    </cofactor>
    <text evidence="1">Binds 1 [4Fe-4S] cluster per subunit.</text>
</comment>
<comment type="pathway">
    <text evidence="1">Amino-acid biosynthesis; L-leucine biosynthesis; L-leucine from 3-methyl-2-oxobutanoate: step 2/4.</text>
</comment>
<comment type="subunit">
    <text evidence="1">Heterodimer of LeuC and LeuD.</text>
</comment>
<comment type="similarity">
    <text evidence="1">Belongs to the aconitase/IPM isomerase family. LeuC type 1 subfamily.</text>
</comment>
<feature type="chain" id="PRO_1000149356" description="3-isopropylmalate dehydratase large subunit">
    <location>
        <begin position="1"/>
        <end position="469"/>
    </location>
</feature>
<feature type="binding site" evidence="1">
    <location>
        <position position="350"/>
    </location>
    <ligand>
        <name>[4Fe-4S] cluster</name>
        <dbReference type="ChEBI" id="CHEBI:49883"/>
    </ligand>
</feature>
<feature type="binding site" evidence="1">
    <location>
        <position position="410"/>
    </location>
    <ligand>
        <name>[4Fe-4S] cluster</name>
        <dbReference type="ChEBI" id="CHEBI:49883"/>
    </ligand>
</feature>
<feature type="binding site" evidence="1">
    <location>
        <position position="413"/>
    </location>
    <ligand>
        <name>[4Fe-4S] cluster</name>
        <dbReference type="ChEBI" id="CHEBI:49883"/>
    </ligand>
</feature>
<organism>
    <name type="scientific">Brucella melitensis biotype 2 (strain ATCC 23457)</name>
    <dbReference type="NCBI Taxonomy" id="546272"/>
    <lineage>
        <taxon>Bacteria</taxon>
        <taxon>Pseudomonadati</taxon>
        <taxon>Pseudomonadota</taxon>
        <taxon>Alphaproteobacteria</taxon>
        <taxon>Hyphomicrobiales</taxon>
        <taxon>Brucellaceae</taxon>
        <taxon>Brucella/Ochrobactrum group</taxon>
        <taxon>Brucella</taxon>
    </lineage>
</organism>
<proteinExistence type="inferred from homology"/>
<dbReference type="EC" id="4.2.1.33" evidence="1"/>
<dbReference type="EMBL" id="CP001488">
    <property type="protein sequence ID" value="ACO01623.1"/>
    <property type="molecule type" value="Genomic_DNA"/>
</dbReference>
<dbReference type="RefSeq" id="WP_004684442.1">
    <property type="nucleotide sequence ID" value="NC_012441.1"/>
</dbReference>
<dbReference type="SMR" id="C0RFF1"/>
<dbReference type="GeneID" id="29594568"/>
<dbReference type="KEGG" id="bmi:BMEA_A1961"/>
<dbReference type="HOGENOM" id="CLU_006714_3_4_5"/>
<dbReference type="UniPathway" id="UPA00048">
    <property type="reaction ID" value="UER00071"/>
</dbReference>
<dbReference type="PRO" id="PR:C0RFF1"/>
<dbReference type="Proteomes" id="UP000001748">
    <property type="component" value="Chromosome I"/>
</dbReference>
<dbReference type="GO" id="GO:0003861">
    <property type="term" value="F:3-isopropylmalate dehydratase activity"/>
    <property type="evidence" value="ECO:0007669"/>
    <property type="project" value="UniProtKB-UniRule"/>
</dbReference>
<dbReference type="GO" id="GO:0051539">
    <property type="term" value="F:4 iron, 4 sulfur cluster binding"/>
    <property type="evidence" value="ECO:0007669"/>
    <property type="project" value="UniProtKB-KW"/>
</dbReference>
<dbReference type="GO" id="GO:0046872">
    <property type="term" value="F:metal ion binding"/>
    <property type="evidence" value="ECO:0007669"/>
    <property type="project" value="UniProtKB-KW"/>
</dbReference>
<dbReference type="GO" id="GO:0009098">
    <property type="term" value="P:L-leucine biosynthetic process"/>
    <property type="evidence" value="ECO:0007669"/>
    <property type="project" value="UniProtKB-UniRule"/>
</dbReference>
<dbReference type="CDD" id="cd01583">
    <property type="entry name" value="IPMI"/>
    <property type="match status" value="1"/>
</dbReference>
<dbReference type="FunFam" id="3.30.499.10:FF:000006">
    <property type="entry name" value="3-isopropylmalate dehydratase large subunit"/>
    <property type="match status" value="1"/>
</dbReference>
<dbReference type="FunFam" id="3.30.499.10:FF:000007">
    <property type="entry name" value="3-isopropylmalate dehydratase large subunit"/>
    <property type="match status" value="1"/>
</dbReference>
<dbReference type="Gene3D" id="3.30.499.10">
    <property type="entry name" value="Aconitase, domain 3"/>
    <property type="match status" value="2"/>
</dbReference>
<dbReference type="HAMAP" id="MF_01026">
    <property type="entry name" value="LeuC_type1"/>
    <property type="match status" value="1"/>
</dbReference>
<dbReference type="InterPro" id="IPR004430">
    <property type="entry name" value="3-IsopropMal_deHydase_lsu"/>
</dbReference>
<dbReference type="InterPro" id="IPR015931">
    <property type="entry name" value="Acnase/IPM_dHydase_lsu_aba_1/3"/>
</dbReference>
<dbReference type="InterPro" id="IPR001030">
    <property type="entry name" value="Acoase/IPM_deHydtase_lsu_aba"/>
</dbReference>
<dbReference type="InterPro" id="IPR018136">
    <property type="entry name" value="Aconitase_4Fe-4S_BS"/>
</dbReference>
<dbReference type="InterPro" id="IPR036008">
    <property type="entry name" value="Aconitase_4Fe-4S_dom"/>
</dbReference>
<dbReference type="InterPro" id="IPR050067">
    <property type="entry name" value="IPM_dehydratase_rel_enz"/>
</dbReference>
<dbReference type="InterPro" id="IPR033941">
    <property type="entry name" value="IPMI_cat"/>
</dbReference>
<dbReference type="NCBIfam" id="TIGR00170">
    <property type="entry name" value="leuC"/>
    <property type="match status" value="1"/>
</dbReference>
<dbReference type="NCBIfam" id="NF004016">
    <property type="entry name" value="PRK05478.1"/>
    <property type="match status" value="1"/>
</dbReference>
<dbReference type="NCBIfam" id="NF009116">
    <property type="entry name" value="PRK12466.1"/>
    <property type="match status" value="1"/>
</dbReference>
<dbReference type="PANTHER" id="PTHR43822:SF9">
    <property type="entry name" value="3-ISOPROPYLMALATE DEHYDRATASE"/>
    <property type="match status" value="1"/>
</dbReference>
<dbReference type="PANTHER" id="PTHR43822">
    <property type="entry name" value="HOMOACONITASE, MITOCHONDRIAL-RELATED"/>
    <property type="match status" value="1"/>
</dbReference>
<dbReference type="Pfam" id="PF00330">
    <property type="entry name" value="Aconitase"/>
    <property type="match status" value="1"/>
</dbReference>
<dbReference type="PRINTS" id="PR00415">
    <property type="entry name" value="ACONITASE"/>
</dbReference>
<dbReference type="SUPFAM" id="SSF53732">
    <property type="entry name" value="Aconitase iron-sulfur domain"/>
    <property type="match status" value="1"/>
</dbReference>
<dbReference type="PROSITE" id="PS00450">
    <property type="entry name" value="ACONITASE_1"/>
    <property type="match status" value="1"/>
</dbReference>
<dbReference type="PROSITE" id="PS01244">
    <property type="entry name" value="ACONITASE_2"/>
    <property type="match status" value="1"/>
</dbReference>
<sequence length="469" mass="50692">MSAPRTLYDKIWDDHVVDQQEDGTCLLYIDRHLVHEVTSPQAFEGLHMAGRPVRHPEKTLAVVDHNVPTSPDRINGIQNEESRIQVEALARNAADFGVEYYSERDKRQGIVHIVGPEQGFTLPGMTIVCGDSHTSTHGAFGALAHGIGTSEVEHVLATQTLIQKKAKNMLVRVDGKLPAGVTAKDIVLAIIGEIGTAGGTGYVIEYAGEAIRSLSMEGRMTICNMSIEGGARAGLIAPDETTFEYIKGRPRAPQGETLEQAINYWKTLHSDEGAHFDKIVTLDAGSLPPIVSWGSSPEDVVSVTGVVPNPDDIADETKRASKWRALDYMGLKPGTKITDIAVDRVFIGSCTNGRIEDLRAAAKVVEGKKVAPTVNAMIVPGSGLVKEQAEAEGLHKIFIEAGFDWREPGCSMCLAMNDDRLKPGERCASTSNRNFEGRQGFKGRTHLVSPAMAAAAAIAGHFVDIRAWK</sequence>
<reference key="1">
    <citation type="submission" date="2009-03" db="EMBL/GenBank/DDBJ databases">
        <title>Brucella melitensis ATCC 23457 whole genome shotgun sequencing project.</title>
        <authorList>
            <person name="Setubal J.C."/>
            <person name="Boyle S."/>
            <person name="Crasta O.R."/>
            <person name="Gillespie J.J."/>
            <person name="Kenyon R.W."/>
            <person name="Lu J."/>
            <person name="Mane S."/>
            <person name="Nagrani S."/>
            <person name="Shallom J.M."/>
            <person name="Shallom S."/>
            <person name="Shukla M."/>
            <person name="Snyder E.E."/>
            <person name="Sobral B.W."/>
            <person name="Wattam A.R."/>
            <person name="Will R."/>
            <person name="Williams K."/>
            <person name="Yoo H."/>
            <person name="Munk C."/>
            <person name="Tapia R."/>
            <person name="Han C."/>
            <person name="Detter J.C."/>
            <person name="Bruce D."/>
            <person name="Brettin T.S."/>
        </authorList>
    </citation>
    <scope>NUCLEOTIDE SEQUENCE [LARGE SCALE GENOMIC DNA]</scope>
    <source>
        <strain>ATCC 23457</strain>
    </source>
</reference>
<name>LEUC_BRUMB</name>
<gene>
    <name evidence="1" type="primary">leuC</name>
    <name type="ordered locus">BMEA_A1961</name>
</gene>
<keyword id="KW-0004">4Fe-4S</keyword>
<keyword id="KW-0028">Amino-acid biosynthesis</keyword>
<keyword id="KW-0100">Branched-chain amino acid biosynthesis</keyword>
<keyword id="KW-0408">Iron</keyword>
<keyword id="KW-0411">Iron-sulfur</keyword>
<keyword id="KW-0432">Leucine biosynthesis</keyword>
<keyword id="KW-0456">Lyase</keyword>
<keyword id="KW-0479">Metal-binding</keyword>